<evidence type="ECO:0000255" key="1">
    <source>
        <dbReference type="HAMAP-Rule" id="MF_00074"/>
    </source>
</evidence>
<evidence type="ECO:0000256" key="2">
    <source>
        <dbReference type="SAM" id="MobiDB-lite"/>
    </source>
</evidence>
<keyword id="KW-0963">Cytoplasm</keyword>
<keyword id="KW-0489">Methyltransferase</keyword>
<keyword id="KW-0698">rRNA processing</keyword>
<keyword id="KW-0949">S-adenosyl-L-methionine</keyword>
<keyword id="KW-0808">Transferase</keyword>
<dbReference type="EC" id="2.1.1.-" evidence="1"/>
<dbReference type="EMBL" id="FM211187">
    <property type="protein sequence ID" value="CAR68986.1"/>
    <property type="molecule type" value="Genomic_DNA"/>
</dbReference>
<dbReference type="RefSeq" id="WP_000801931.1">
    <property type="nucleotide sequence ID" value="NC_011900.1"/>
</dbReference>
<dbReference type="SMR" id="B8ZJU9"/>
<dbReference type="KEGG" id="sne:SPN23F11800"/>
<dbReference type="HOGENOM" id="CLU_065341_0_2_9"/>
<dbReference type="GO" id="GO:0005829">
    <property type="term" value="C:cytosol"/>
    <property type="evidence" value="ECO:0007669"/>
    <property type="project" value="TreeGrafter"/>
</dbReference>
<dbReference type="GO" id="GO:0070043">
    <property type="term" value="F:rRNA (guanine-N7-)-methyltransferase activity"/>
    <property type="evidence" value="ECO:0007669"/>
    <property type="project" value="UniProtKB-UniRule"/>
</dbReference>
<dbReference type="CDD" id="cd02440">
    <property type="entry name" value="AdoMet_MTases"/>
    <property type="match status" value="1"/>
</dbReference>
<dbReference type="FunFam" id="3.40.50.150:FF:000041">
    <property type="entry name" value="Ribosomal RNA small subunit methyltransferase G"/>
    <property type="match status" value="1"/>
</dbReference>
<dbReference type="Gene3D" id="3.40.50.150">
    <property type="entry name" value="Vaccinia Virus protein VP39"/>
    <property type="match status" value="1"/>
</dbReference>
<dbReference type="HAMAP" id="MF_00074">
    <property type="entry name" value="16SrRNA_methyltr_G"/>
    <property type="match status" value="1"/>
</dbReference>
<dbReference type="InterPro" id="IPR003682">
    <property type="entry name" value="rRNA_ssu_MeTfrase_G"/>
</dbReference>
<dbReference type="InterPro" id="IPR029063">
    <property type="entry name" value="SAM-dependent_MTases_sf"/>
</dbReference>
<dbReference type="NCBIfam" id="TIGR00138">
    <property type="entry name" value="rsmG_gidB"/>
    <property type="match status" value="1"/>
</dbReference>
<dbReference type="PANTHER" id="PTHR31760">
    <property type="entry name" value="S-ADENOSYL-L-METHIONINE-DEPENDENT METHYLTRANSFERASES SUPERFAMILY PROTEIN"/>
    <property type="match status" value="1"/>
</dbReference>
<dbReference type="PANTHER" id="PTHR31760:SF0">
    <property type="entry name" value="S-ADENOSYL-L-METHIONINE-DEPENDENT METHYLTRANSFERASES SUPERFAMILY PROTEIN"/>
    <property type="match status" value="1"/>
</dbReference>
<dbReference type="Pfam" id="PF02527">
    <property type="entry name" value="GidB"/>
    <property type="match status" value="1"/>
</dbReference>
<dbReference type="PIRSF" id="PIRSF003078">
    <property type="entry name" value="GidB"/>
    <property type="match status" value="1"/>
</dbReference>
<dbReference type="SUPFAM" id="SSF53335">
    <property type="entry name" value="S-adenosyl-L-methionine-dependent methyltransferases"/>
    <property type="match status" value="1"/>
</dbReference>
<protein>
    <recommendedName>
        <fullName evidence="1">Ribosomal RNA small subunit methyltransferase G</fullName>
        <ecNumber evidence="1">2.1.1.-</ecNumber>
    </recommendedName>
    <alternativeName>
        <fullName evidence="1">16S rRNA 7-methylguanosine methyltransferase</fullName>
        <shortName evidence="1">16S rRNA m7G methyltransferase</shortName>
    </alternativeName>
</protein>
<name>RSMG_STRPJ</name>
<organism>
    <name type="scientific">Streptococcus pneumoniae (strain ATCC 700669 / Spain 23F-1)</name>
    <dbReference type="NCBI Taxonomy" id="561276"/>
    <lineage>
        <taxon>Bacteria</taxon>
        <taxon>Bacillati</taxon>
        <taxon>Bacillota</taxon>
        <taxon>Bacilli</taxon>
        <taxon>Lactobacillales</taxon>
        <taxon>Streptococcaceae</taxon>
        <taxon>Streptococcus</taxon>
    </lineage>
</organism>
<proteinExistence type="inferred from homology"/>
<accession>B8ZJU9</accession>
<feature type="chain" id="PRO_1000118201" description="Ribosomal RNA small subunit methyltransferase G">
    <location>
        <begin position="1"/>
        <end position="237"/>
    </location>
</feature>
<feature type="region of interest" description="Disordered" evidence="2">
    <location>
        <begin position="218"/>
        <end position="237"/>
    </location>
</feature>
<feature type="binding site" evidence="1">
    <location>
        <position position="78"/>
    </location>
    <ligand>
        <name>S-adenosyl-L-methionine</name>
        <dbReference type="ChEBI" id="CHEBI:59789"/>
    </ligand>
</feature>
<feature type="binding site" evidence="1">
    <location>
        <position position="83"/>
    </location>
    <ligand>
        <name>S-adenosyl-L-methionine</name>
        <dbReference type="ChEBI" id="CHEBI:59789"/>
    </ligand>
</feature>
<feature type="binding site" evidence="1">
    <location>
        <begin position="129"/>
        <end position="130"/>
    </location>
    <ligand>
        <name>S-adenosyl-L-methionine</name>
        <dbReference type="ChEBI" id="CHEBI:59789"/>
    </ligand>
</feature>
<feature type="binding site" evidence="1">
    <location>
        <position position="148"/>
    </location>
    <ligand>
        <name>S-adenosyl-L-methionine</name>
        <dbReference type="ChEBI" id="CHEBI:59789"/>
    </ligand>
</feature>
<gene>
    <name evidence="1" type="primary">rsmG</name>
    <name type="ordered locus">SPN23F11800</name>
</gene>
<comment type="function">
    <text evidence="1">Specifically methylates the N7 position of a guanine in 16S rRNA.</text>
</comment>
<comment type="subcellular location">
    <subcellularLocation>
        <location evidence="1">Cytoplasm</location>
    </subcellularLocation>
</comment>
<comment type="similarity">
    <text evidence="1">Belongs to the methyltransferase superfamily. RNA methyltransferase RsmG family.</text>
</comment>
<sequence length="237" mass="27199">MKPETFYNLLAEQNLPLSDQQKEQFERYFELLVEWNEKINLTAITDKEEVYLKHFYDSIAPILQGLIPNETIKLLDIGAGAGFPSLPMKILYPELDVTIIDSLNKRINFLQLLAQELDLNGVHFYHGRAEDFAQDKNFRAQYDFVTARAVARMQVLSELTIPYLKVGGKLLALKASNAPEELLEAKNALNLLFSKVEDNLSYALPNRDPRYITVVEKKKETPNKYPRKAGMPNKRPL</sequence>
<reference key="1">
    <citation type="journal article" date="2009" name="J. Bacteriol.">
        <title>Role of conjugative elements in the evolution of the multidrug-resistant pandemic clone Streptococcus pneumoniae Spain23F ST81.</title>
        <authorList>
            <person name="Croucher N.J."/>
            <person name="Walker D."/>
            <person name="Romero P."/>
            <person name="Lennard N."/>
            <person name="Paterson G.K."/>
            <person name="Bason N.C."/>
            <person name="Mitchell A.M."/>
            <person name="Quail M.A."/>
            <person name="Andrew P.W."/>
            <person name="Parkhill J."/>
            <person name="Bentley S.D."/>
            <person name="Mitchell T.J."/>
        </authorList>
    </citation>
    <scope>NUCLEOTIDE SEQUENCE [LARGE SCALE GENOMIC DNA]</scope>
    <source>
        <strain>ATCC 700669 / Spain 23F-1</strain>
    </source>
</reference>